<proteinExistence type="inferred from homology"/>
<protein>
    <recommendedName>
        <fullName>Ferrous iron permease EfeU</fullName>
    </recommendedName>
    <alternativeName>
        <fullName>Fe(2+) ion permease EfeU</fullName>
    </alternativeName>
    <alternativeName>
        <fullName>Ferrous iron uptake protein</fullName>
    </alternativeName>
</protein>
<comment type="function">
    <text evidence="1">Uptake of Fe(2+) ions across the membrane.</text>
</comment>
<comment type="subunit">
    <text evidence="1">Part of a ferrous iron transporter composed of EfeU, EfeO and EfeB.</text>
</comment>
<comment type="subcellular location">
    <subcellularLocation>
        <location evidence="1">Cell inner membrane</location>
        <topology evidence="1">Multi-pass membrane protein</topology>
    </subcellularLocation>
</comment>
<comment type="similarity">
    <text evidence="3">Belongs to the oxidase-dependent Fe transporter (OFeT) (TC 9.A.10.1) family.</text>
</comment>
<sequence>MFVPFLIMFREGLEAALIVSLIASYLKRTQRGQWMGAVWVGVVVAAVLCLAIGIFINETTGEFPQKQQELFEGIIAVVAVCILTYMVFWMRKVSKSVKVHLEGAIDNALNSGRGQGWALVAMVFFAVAREGLESVFFLLAAFQQDVGIGAPIGAILGLVCAILVGMAIYWGGVKLHLAKFFKWTSLFILFVAAGLAAGAIRAFHEAGLWNHFQDIAFDLTDVLSTHSLLGTFLEGMFGYQEAPTVSEVSVYFIYLIPALILFFLPPRSTAGSAIAAARKINP</sequence>
<dbReference type="EMBL" id="CP000308">
    <property type="protein sequence ID" value="ABG13199.1"/>
    <property type="molecule type" value="Genomic_DNA"/>
</dbReference>
<dbReference type="RefSeq" id="WP_002211165.1">
    <property type="nucleotide sequence ID" value="NZ_CP009906.1"/>
</dbReference>
<dbReference type="GeneID" id="57976727"/>
<dbReference type="KEGG" id="ypa:YPA_1232"/>
<dbReference type="Proteomes" id="UP000001971">
    <property type="component" value="Chromosome"/>
</dbReference>
<dbReference type="GO" id="GO:0033573">
    <property type="term" value="C:high-affinity iron permease complex"/>
    <property type="evidence" value="ECO:0007669"/>
    <property type="project" value="InterPro"/>
</dbReference>
<dbReference type="GO" id="GO:0015093">
    <property type="term" value="F:ferrous iron transmembrane transporter activity"/>
    <property type="evidence" value="ECO:0007669"/>
    <property type="project" value="TreeGrafter"/>
</dbReference>
<dbReference type="InterPro" id="IPR004923">
    <property type="entry name" value="FTR1/Fip1/EfeU"/>
</dbReference>
<dbReference type="NCBIfam" id="NF041756">
    <property type="entry name" value="EfeU"/>
    <property type="match status" value="1"/>
</dbReference>
<dbReference type="PANTHER" id="PTHR31632">
    <property type="entry name" value="IRON TRANSPORTER FTH1"/>
    <property type="match status" value="1"/>
</dbReference>
<dbReference type="PANTHER" id="PTHR31632:SF2">
    <property type="entry name" value="PLASMA MEMBRANE IRON PERMEASE"/>
    <property type="match status" value="1"/>
</dbReference>
<dbReference type="Pfam" id="PF03239">
    <property type="entry name" value="FTR1"/>
    <property type="match status" value="1"/>
</dbReference>
<keyword id="KW-0997">Cell inner membrane</keyword>
<keyword id="KW-1003">Cell membrane</keyword>
<keyword id="KW-0406">Ion transport</keyword>
<keyword id="KW-0408">Iron</keyword>
<keyword id="KW-0410">Iron transport</keyword>
<keyword id="KW-0472">Membrane</keyword>
<keyword id="KW-0812">Transmembrane</keyword>
<keyword id="KW-1133">Transmembrane helix</keyword>
<keyword id="KW-0813">Transport</keyword>
<reference key="1">
    <citation type="journal article" date="2006" name="J. Bacteriol.">
        <title>Complete genome sequence of Yersinia pestis strains Antiqua and Nepal516: evidence of gene reduction in an emerging pathogen.</title>
        <authorList>
            <person name="Chain P.S.G."/>
            <person name="Hu P."/>
            <person name="Malfatti S.A."/>
            <person name="Radnedge L."/>
            <person name="Larimer F."/>
            <person name="Vergez L.M."/>
            <person name="Worsham P."/>
            <person name="Chu M.C."/>
            <person name="Andersen G.L."/>
        </authorList>
    </citation>
    <scope>NUCLEOTIDE SEQUENCE [LARGE SCALE GENOMIC DNA]</scope>
    <source>
        <strain>Antiqua</strain>
    </source>
</reference>
<feature type="chain" id="PRO_0000277550" description="Ferrous iron permease EfeU">
    <location>
        <begin position="1"/>
        <end position="282"/>
    </location>
</feature>
<feature type="topological domain" description="Periplasmic" evidence="2">
    <location>
        <position position="1"/>
    </location>
</feature>
<feature type="transmembrane region" description="Helical" evidence="2">
    <location>
        <begin position="2"/>
        <end position="22"/>
    </location>
</feature>
<feature type="topological domain" description="Cytoplasmic" evidence="2">
    <location>
        <begin position="23"/>
        <end position="35"/>
    </location>
</feature>
<feature type="transmembrane region" description="Helical" evidence="2">
    <location>
        <begin position="36"/>
        <end position="56"/>
    </location>
</feature>
<feature type="topological domain" description="Periplasmic" evidence="2">
    <location>
        <begin position="57"/>
        <end position="69"/>
    </location>
</feature>
<feature type="transmembrane region" description="Helical" evidence="2">
    <location>
        <begin position="70"/>
        <end position="90"/>
    </location>
</feature>
<feature type="topological domain" description="Cytoplasmic" evidence="2">
    <location>
        <begin position="91"/>
        <end position="118"/>
    </location>
</feature>
<feature type="transmembrane region" description="Helical" evidence="2">
    <location>
        <begin position="119"/>
        <end position="139"/>
    </location>
</feature>
<feature type="topological domain" description="Periplasmic" evidence="2">
    <location>
        <begin position="140"/>
        <end position="147"/>
    </location>
</feature>
<feature type="transmembrane region" description="Helical" evidence="2">
    <location>
        <begin position="148"/>
        <end position="168"/>
    </location>
</feature>
<feature type="topological domain" description="Cytoplasmic" evidence="2">
    <location>
        <begin position="169"/>
        <end position="179"/>
    </location>
</feature>
<feature type="transmembrane region" description="Helical" evidence="2">
    <location>
        <begin position="180"/>
        <end position="200"/>
    </location>
</feature>
<feature type="topological domain" description="Periplasmic" evidence="2">
    <location>
        <begin position="201"/>
        <end position="244"/>
    </location>
</feature>
<feature type="transmembrane region" description="Helical" evidence="2">
    <location>
        <begin position="245"/>
        <end position="265"/>
    </location>
</feature>
<feature type="topological domain" description="Cytoplasmic" evidence="2">
    <location>
        <begin position="266"/>
        <end position="282"/>
    </location>
</feature>
<evidence type="ECO:0000250" key="1"/>
<evidence type="ECO:0000255" key="2"/>
<evidence type="ECO:0000305" key="3"/>
<organism>
    <name type="scientific">Yersinia pestis bv. Antiqua (strain Antiqua)</name>
    <dbReference type="NCBI Taxonomy" id="360102"/>
    <lineage>
        <taxon>Bacteria</taxon>
        <taxon>Pseudomonadati</taxon>
        <taxon>Pseudomonadota</taxon>
        <taxon>Gammaproteobacteria</taxon>
        <taxon>Enterobacterales</taxon>
        <taxon>Yersiniaceae</taxon>
        <taxon>Yersinia</taxon>
    </lineage>
</organism>
<gene>
    <name type="primary">efeU</name>
    <name type="ordered locus">YPA_1232</name>
</gene>
<accession>Q1C8M3</accession>
<name>EFEU_YERPA</name>